<reference key="1">
    <citation type="journal article" date="2001" name="Proc. Natl. Acad. Sci. U.S.A.">
        <title>Complete genome sequence of Caulobacter crescentus.</title>
        <authorList>
            <person name="Nierman W.C."/>
            <person name="Feldblyum T.V."/>
            <person name="Laub M.T."/>
            <person name="Paulsen I.T."/>
            <person name="Nelson K.E."/>
            <person name="Eisen J.A."/>
            <person name="Heidelberg J.F."/>
            <person name="Alley M.R.K."/>
            <person name="Ohta N."/>
            <person name="Maddock J.R."/>
            <person name="Potocka I."/>
            <person name="Nelson W.C."/>
            <person name="Newton A."/>
            <person name="Stephens C."/>
            <person name="Phadke N.D."/>
            <person name="Ely B."/>
            <person name="DeBoy R.T."/>
            <person name="Dodson R.J."/>
            <person name="Durkin A.S."/>
            <person name="Gwinn M.L."/>
            <person name="Haft D.H."/>
            <person name="Kolonay J.F."/>
            <person name="Smit J."/>
            <person name="Craven M.B."/>
            <person name="Khouri H.M."/>
            <person name="Shetty J."/>
            <person name="Berry K.J."/>
            <person name="Utterback T.R."/>
            <person name="Tran K."/>
            <person name="Wolf A.M."/>
            <person name="Vamathevan J.J."/>
            <person name="Ermolaeva M.D."/>
            <person name="White O."/>
            <person name="Salzberg S.L."/>
            <person name="Venter J.C."/>
            <person name="Shapiro L."/>
            <person name="Fraser C.M."/>
        </authorList>
    </citation>
    <scope>NUCLEOTIDE SEQUENCE [LARGE SCALE GENOMIC DNA]</scope>
    <source>
        <strain>ATCC 19089 / CIP 103742 / CB 15</strain>
    </source>
</reference>
<organism>
    <name type="scientific">Caulobacter vibrioides (strain ATCC 19089 / CIP 103742 / CB 15)</name>
    <name type="common">Caulobacter crescentus</name>
    <dbReference type="NCBI Taxonomy" id="190650"/>
    <lineage>
        <taxon>Bacteria</taxon>
        <taxon>Pseudomonadati</taxon>
        <taxon>Pseudomonadota</taxon>
        <taxon>Alphaproteobacteria</taxon>
        <taxon>Caulobacterales</taxon>
        <taxon>Caulobacteraceae</taxon>
        <taxon>Caulobacter</taxon>
    </lineage>
</organism>
<feature type="chain" id="PRO_0000202092" description="C4-dicarboxylate transport protein">
    <location>
        <begin position="1"/>
        <end position="417"/>
    </location>
</feature>
<feature type="transmembrane region" description="Helical" evidence="1">
    <location>
        <begin position="4"/>
        <end position="26"/>
    </location>
</feature>
<feature type="transmembrane region" description="Helical" evidence="1">
    <location>
        <begin position="41"/>
        <end position="60"/>
    </location>
</feature>
<feature type="transmembrane region" description="Helical" evidence="1">
    <location>
        <begin position="72"/>
        <end position="94"/>
    </location>
</feature>
<feature type="transmembrane region" description="Helical" evidence="1">
    <location>
        <begin position="137"/>
        <end position="159"/>
    </location>
</feature>
<feature type="transmembrane region" description="Helical" evidence="1">
    <location>
        <begin position="180"/>
        <end position="202"/>
    </location>
</feature>
<feature type="transmembrane region" description="Helical" evidence="1">
    <location>
        <begin position="217"/>
        <end position="239"/>
    </location>
</feature>
<feature type="transmembrane region" description="Helical" evidence="1">
    <location>
        <begin position="285"/>
        <end position="307"/>
    </location>
</feature>
<feature type="transmembrane region" description="Helical" evidence="1">
    <location>
        <begin position="347"/>
        <end position="369"/>
    </location>
</feature>
<accession>Q9AAH2</accession>
<name>DCTA_CAUVC</name>
<keyword id="KW-0997">Cell inner membrane</keyword>
<keyword id="KW-1003">Cell membrane</keyword>
<keyword id="KW-0472">Membrane</keyword>
<keyword id="KW-1185">Reference proteome</keyword>
<keyword id="KW-0769">Symport</keyword>
<keyword id="KW-0812">Transmembrane</keyword>
<keyword id="KW-1133">Transmembrane helix</keyword>
<keyword id="KW-0813">Transport</keyword>
<evidence type="ECO:0000255" key="1">
    <source>
        <dbReference type="HAMAP-Rule" id="MF_01300"/>
    </source>
</evidence>
<evidence type="ECO:0000305" key="2"/>
<sequence>MKSIYVQVLIAIVLGVLVGAIWPQIGVALKPLGDGFIKLIKLVIAPVIFCTVAGGIARMGDMKAFGRVGVKALIYFEVVSTLALVIGLVVGRLIQPGAGFNIDPATLDASIAAGYVEKAQHGEGMVAYLLHLIPDTFIGAFADGNLLQVLVIAILTGFACVRMGDFGEKVAHVLDETSKLFFGIIHIVVRLAPIGAFGAMGFTIGKYGVEALVQLGALVATFYVTSLLFVLVVLGGIAWVSGFSIFRFLAYIREELLIVLGTSSSESVLPQMMEKLENAGARRSVVGLVIPTGYSFNLDGTNIYMTLATLFLAQATNTPLSLGQELALLGVAMLTSKGASGVTGAGFITLAATLAVVPDIPIAALAILVGVDRFMSECRALTNLVGNGVATLVVARWEGALDRQRLDRVLRGAPATE</sequence>
<dbReference type="EMBL" id="AE005673">
    <property type="protein sequence ID" value="AAK22613.1"/>
    <property type="status" value="ALT_INIT"/>
    <property type="molecule type" value="Genomic_DNA"/>
</dbReference>
<dbReference type="PIR" id="A87327">
    <property type="entry name" value="A87327"/>
</dbReference>
<dbReference type="RefSeq" id="NP_419445.1">
    <property type="nucleotide sequence ID" value="NC_002696.2"/>
</dbReference>
<dbReference type="RefSeq" id="WP_024265578.1">
    <property type="nucleotide sequence ID" value="NC_002696.2"/>
</dbReference>
<dbReference type="SMR" id="Q9AAH2"/>
<dbReference type="STRING" id="190650.CC_0628"/>
<dbReference type="EnsemblBacteria" id="AAK22613">
    <property type="protein sequence ID" value="AAK22613"/>
    <property type="gene ID" value="CC_0628"/>
</dbReference>
<dbReference type="KEGG" id="ccr:CC_0628"/>
<dbReference type="PATRIC" id="fig|190650.5.peg.638"/>
<dbReference type="eggNOG" id="COG1301">
    <property type="taxonomic scope" value="Bacteria"/>
</dbReference>
<dbReference type="HOGENOM" id="CLU_019375_7_0_5"/>
<dbReference type="BioCyc" id="CAULO:CC0628-MONOMER"/>
<dbReference type="Proteomes" id="UP000001816">
    <property type="component" value="Chromosome"/>
</dbReference>
<dbReference type="GO" id="GO:0005886">
    <property type="term" value="C:plasma membrane"/>
    <property type="evidence" value="ECO:0007669"/>
    <property type="project" value="UniProtKB-SubCell"/>
</dbReference>
<dbReference type="GO" id="GO:0015138">
    <property type="term" value="F:fumarate transmembrane transporter activity"/>
    <property type="evidence" value="ECO:0007669"/>
    <property type="project" value="TreeGrafter"/>
</dbReference>
<dbReference type="GO" id="GO:0015366">
    <property type="term" value="F:malate:proton symporter activity"/>
    <property type="evidence" value="ECO:0007669"/>
    <property type="project" value="TreeGrafter"/>
</dbReference>
<dbReference type="GO" id="GO:0015141">
    <property type="term" value="F:succinate transmembrane transporter activity"/>
    <property type="evidence" value="ECO:0007669"/>
    <property type="project" value="TreeGrafter"/>
</dbReference>
<dbReference type="GO" id="GO:0070778">
    <property type="term" value="P:L-aspartate transmembrane transport"/>
    <property type="evidence" value="ECO:0007669"/>
    <property type="project" value="TreeGrafter"/>
</dbReference>
<dbReference type="FunFam" id="1.10.3860.10:FF:000001">
    <property type="entry name" value="C4-dicarboxylate transport protein"/>
    <property type="match status" value="1"/>
</dbReference>
<dbReference type="Gene3D" id="1.10.3860.10">
    <property type="entry name" value="Sodium:dicarboxylate symporter"/>
    <property type="match status" value="1"/>
</dbReference>
<dbReference type="HAMAP" id="MF_01300">
    <property type="entry name" value="C4_dicarb_transport"/>
    <property type="match status" value="1"/>
</dbReference>
<dbReference type="InterPro" id="IPR023954">
    <property type="entry name" value="C4_dicarb_transport"/>
</dbReference>
<dbReference type="InterPro" id="IPR001991">
    <property type="entry name" value="Na-dicarboxylate_symporter"/>
</dbReference>
<dbReference type="InterPro" id="IPR018107">
    <property type="entry name" value="Na-dicarboxylate_symporter_CS"/>
</dbReference>
<dbReference type="InterPro" id="IPR036458">
    <property type="entry name" value="Na:dicarbo_symporter_sf"/>
</dbReference>
<dbReference type="NCBIfam" id="NF002461">
    <property type="entry name" value="PRK01663.1"/>
    <property type="match status" value="1"/>
</dbReference>
<dbReference type="NCBIfam" id="NF009587">
    <property type="entry name" value="PRK13027.1"/>
    <property type="match status" value="1"/>
</dbReference>
<dbReference type="PANTHER" id="PTHR42865:SF1">
    <property type="entry name" value="AEROBIC C4-DICARBOXYLATE TRANSPORT PROTEIN"/>
    <property type="match status" value="1"/>
</dbReference>
<dbReference type="PANTHER" id="PTHR42865">
    <property type="entry name" value="PROTON/GLUTAMATE-ASPARTATE SYMPORTER"/>
    <property type="match status" value="1"/>
</dbReference>
<dbReference type="Pfam" id="PF00375">
    <property type="entry name" value="SDF"/>
    <property type="match status" value="1"/>
</dbReference>
<dbReference type="PRINTS" id="PR00173">
    <property type="entry name" value="EDTRNSPORT"/>
</dbReference>
<dbReference type="SUPFAM" id="SSF118215">
    <property type="entry name" value="Proton glutamate symport protein"/>
    <property type="match status" value="1"/>
</dbReference>
<dbReference type="PROSITE" id="PS00713">
    <property type="entry name" value="NA_DICARBOXYL_SYMP_1"/>
    <property type="match status" value="1"/>
</dbReference>
<dbReference type="PROSITE" id="PS00714">
    <property type="entry name" value="NA_DICARBOXYL_SYMP_2"/>
    <property type="match status" value="1"/>
</dbReference>
<proteinExistence type="inferred from homology"/>
<comment type="function">
    <text evidence="1">Responsible for the transport of dicarboxylates such as succinate, fumarate, and malate from the periplasm across the membrane.</text>
</comment>
<comment type="subcellular location">
    <subcellularLocation>
        <location evidence="1">Cell inner membrane</location>
        <topology evidence="1">Multi-pass membrane protein</topology>
    </subcellularLocation>
</comment>
<comment type="similarity">
    <text evidence="1">Belongs to the dicarboxylate/amino acid:cation symporter (DAACS) (TC 2.A.23) family.</text>
</comment>
<comment type="sequence caution" evidence="2">
    <conflict type="erroneous initiation">
        <sequence resource="EMBL-CDS" id="AAK22613"/>
    </conflict>
    <text>Extended N-terminus.</text>
</comment>
<protein>
    <recommendedName>
        <fullName evidence="1">C4-dicarboxylate transport protein</fullName>
    </recommendedName>
</protein>
<gene>
    <name evidence="1" type="primary">dctA</name>
    <name type="ordered locus">CC_0628</name>
</gene>